<keyword id="KW-0072">Autophagy</keyword>
<keyword id="KW-0175">Coiled coil</keyword>
<keyword id="KW-0963">Cytoplasm</keyword>
<keyword id="KW-0472">Membrane</keyword>
<keyword id="KW-0653">Protein transport</keyword>
<keyword id="KW-1185">Reference proteome</keyword>
<keyword id="KW-0813">Transport</keyword>
<protein>
    <recommendedName>
        <fullName evidence="6">Autophagy-related protein 23</fullName>
    </recommendedName>
</protein>
<sequence>MFQRFKSAIDRTIAEEQARQQTATQSRSPSRTGSTSSRKGDGTPGQRVKSRKQASDAGDAPNPDPAVFEAAFVIDDSDEPSRAATPLPPNAADEKKSDNTNGQGNMPEDKTPEGQGANDEGSADKAQDGATDAPATKPQAPKLQEMSPEIRQKLRKLEKLEATYPELLRSYRVAHRRATAIEPFEKALRENTPLTSISDPEALVEYLNQVNLRSDMVMQELKKVSTDKDELQKKYNEAEEKAKKLEEELVAVRSASTDQPKTSDSETSKDAQDGKNGATSPEDPEKSKSPVSSVMGMFSPKHKPQKSLGEVAETKESNEEFFSYDDEIPQLQADVASKSEEIEKLKSEVEDLQKELTTARETSTGLVESLENATRELSKTRDVASVKDSLQAQLDDRNKEITSLNQRLEEVQKQLKQLEEDKNAHTAKVDELEVSLASSDKRTSELDAELAKASNAKNISKKLIDDLNNQIETLKNEKSDSQTKITDLTKKLESKPAPAMLTPAATPMPTVLQPAATSATAASGGGKKKNNKKKKGKGGVGGAVAPSQAPTAGDPVETPEPVITTDTAGNAELKAEIVKLKEEVAEKDTQIDRLSKRRKTEEDLREEIESLQENILMIGQDHVEAKDKIKELEAEKLELKTQITDLEKKISSSTSDAEASSKMQSEMESIKTEYSDLKEKTSTLQADLGAAQQLAQNRFKDLTELREVLQKAQPELKSLRQESATLKATKEELANKTKELRDMEKREKDLKRDVERAQKISSDRETEIKSLQEKLTVETNAKLRLEDAQRVSGRDLRRSEAEKVEISGRADKAEQELQSVQEELSKLRPKVKELEEQMHKLKREKAASQEEADFKTQQYSNAQGLLSSMRDQTAEMSVQLKESKSQAESLEEELAEVQRLLQERTREGETMRRLLADVDERADNKVRDMRARMEAAVEERDRIEDESATLARRKTRETEDLKQKLKDLEREVKTLTHERDELEQREKEWRKRREELESVEEKAEAETDELRTTASQLRTALDASEKQVRDVEKQRAELRRMLEESRQRYEKLSKDLKAAQTKLVASSSRSSFDSVRSGSNGSPAGAPDTVYLKTILLQFLEQKDTKLRAQLVPVLGKLLRFDKTDEQKWQKAVQHIEVK</sequence>
<gene>
    <name evidence="6" type="primary">ATG23</name>
    <name type="ORF">FG02793</name>
    <name type="ORF">FGRAMPH1_01T11327</name>
</gene>
<organism>
    <name type="scientific">Gibberella zeae (strain ATCC MYA-4620 / CBS 123657 / FGSC 9075 / NRRL 31084 / PH-1)</name>
    <name type="common">Wheat head blight fungus</name>
    <name type="synonym">Fusarium graminearum</name>
    <dbReference type="NCBI Taxonomy" id="229533"/>
    <lineage>
        <taxon>Eukaryota</taxon>
        <taxon>Fungi</taxon>
        <taxon>Dikarya</taxon>
        <taxon>Ascomycota</taxon>
        <taxon>Pezizomycotina</taxon>
        <taxon>Sordariomycetes</taxon>
        <taxon>Hypocreomycetidae</taxon>
        <taxon>Hypocreales</taxon>
        <taxon>Nectriaceae</taxon>
        <taxon>Fusarium</taxon>
    </lineage>
</organism>
<reference key="1">
    <citation type="journal article" date="2007" name="Science">
        <title>The Fusarium graminearum genome reveals a link between localized polymorphism and pathogen specialization.</title>
        <authorList>
            <person name="Cuomo C.A."/>
            <person name="Gueldener U."/>
            <person name="Xu J.-R."/>
            <person name="Trail F."/>
            <person name="Turgeon B.G."/>
            <person name="Di Pietro A."/>
            <person name="Walton J.D."/>
            <person name="Ma L.-J."/>
            <person name="Baker S.E."/>
            <person name="Rep M."/>
            <person name="Adam G."/>
            <person name="Antoniw J."/>
            <person name="Baldwin T."/>
            <person name="Calvo S.E."/>
            <person name="Chang Y.-L."/>
            <person name="DeCaprio D."/>
            <person name="Gale L.R."/>
            <person name="Gnerre S."/>
            <person name="Goswami R.S."/>
            <person name="Hammond-Kosack K."/>
            <person name="Harris L.J."/>
            <person name="Hilburn K."/>
            <person name="Kennell J.C."/>
            <person name="Kroken S."/>
            <person name="Magnuson J.K."/>
            <person name="Mannhaupt G."/>
            <person name="Mauceli E.W."/>
            <person name="Mewes H.-W."/>
            <person name="Mitterbauer R."/>
            <person name="Muehlbauer G."/>
            <person name="Muensterkoetter M."/>
            <person name="Nelson D."/>
            <person name="O'Donnell K."/>
            <person name="Ouellet T."/>
            <person name="Qi W."/>
            <person name="Quesneville H."/>
            <person name="Roncero M.I.G."/>
            <person name="Seong K.-Y."/>
            <person name="Tetko I.V."/>
            <person name="Urban M."/>
            <person name="Waalwijk C."/>
            <person name="Ward T.J."/>
            <person name="Yao J."/>
            <person name="Birren B.W."/>
            <person name="Kistler H.C."/>
        </authorList>
    </citation>
    <scope>NUCLEOTIDE SEQUENCE [LARGE SCALE GENOMIC DNA]</scope>
    <source>
        <strain>ATCC MYA-4620 / CBS 123657 / FGSC 9075 / NRRL 31084 / PH-1</strain>
    </source>
</reference>
<reference key="2">
    <citation type="journal article" date="2010" name="Nature">
        <title>Comparative genomics reveals mobile pathogenicity chromosomes in Fusarium.</title>
        <authorList>
            <person name="Ma L.-J."/>
            <person name="van der Does H.C."/>
            <person name="Borkovich K.A."/>
            <person name="Coleman J.J."/>
            <person name="Daboussi M.-J."/>
            <person name="Di Pietro A."/>
            <person name="Dufresne M."/>
            <person name="Freitag M."/>
            <person name="Grabherr M."/>
            <person name="Henrissat B."/>
            <person name="Houterman P.M."/>
            <person name="Kang S."/>
            <person name="Shim W.-B."/>
            <person name="Woloshuk C."/>
            <person name="Xie X."/>
            <person name="Xu J.-R."/>
            <person name="Antoniw J."/>
            <person name="Baker S.E."/>
            <person name="Bluhm B.H."/>
            <person name="Breakspear A."/>
            <person name="Brown D.W."/>
            <person name="Butchko R.A.E."/>
            <person name="Chapman S."/>
            <person name="Coulson R."/>
            <person name="Coutinho P.M."/>
            <person name="Danchin E.G.J."/>
            <person name="Diener A."/>
            <person name="Gale L.R."/>
            <person name="Gardiner D.M."/>
            <person name="Goff S."/>
            <person name="Hammond-Kosack K.E."/>
            <person name="Hilburn K."/>
            <person name="Hua-Van A."/>
            <person name="Jonkers W."/>
            <person name="Kazan K."/>
            <person name="Kodira C.D."/>
            <person name="Koehrsen M."/>
            <person name="Kumar L."/>
            <person name="Lee Y.-H."/>
            <person name="Li L."/>
            <person name="Manners J.M."/>
            <person name="Miranda-Saavedra D."/>
            <person name="Mukherjee M."/>
            <person name="Park G."/>
            <person name="Park J."/>
            <person name="Park S.-Y."/>
            <person name="Proctor R.H."/>
            <person name="Regev A."/>
            <person name="Ruiz-Roldan M.C."/>
            <person name="Sain D."/>
            <person name="Sakthikumar S."/>
            <person name="Sykes S."/>
            <person name="Schwartz D.C."/>
            <person name="Turgeon B.G."/>
            <person name="Wapinski I."/>
            <person name="Yoder O."/>
            <person name="Young S."/>
            <person name="Zeng Q."/>
            <person name="Zhou S."/>
            <person name="Galagan J."/>
            <person name="Cuomo C.A."/>
            <person name="Kistler H.C."/>
            <person name="Rep M."/>
        </authorList>
    </citation>
    <scope>GENOME REANNOTATION</scope>
    <source>
        <strain>ATCC MYA-4620 / CBS 123657 / FGSC 9075 / NRRL 31084 / PH-1</strain>
    </source>
</reference>
<reference key="3">
    <citation type="journal article" date="2015" name="BMC Genomics">
        <title>The completed genome sequence of the pathogenic ascomycete fungus Fusarium graminearum.</title>
        <authorList>
            <person name="King R."/>
            <person name="Urban M."/>
            <person name="Hammond-Kosack M.C.U."/>
            <person name="Hassani-Pak K."/>
            <person name="Hammond-Kosack K.E."/>
        </authorList>
    </citation>
    <scope>NUCLEOTIDE SEQUENCE [LARGE SCALE GENOMIC DNA]</scope>
    <source>
        <strain>ATCC MYA-4620 / CBS 123657 / FGSC 9075 / NRRL 31084 / PH-1</strain>
    </source>
</reference>
<reference key="4">
    <citation type="journal article" date="2017" name="Sci. Rep.">
        <title>Genome-wide functional analysis reveals that autophagy is necessary for growth, sporulation, deoxynivalenol production and virulence in Fusarium graminearum.</title>
        <authorList>
            <person name="Lv W."/>
            <person name="Wang C."/>
            <person name="Yang N."/>
            <person name="Que Y."/>
            <person name="Talbot N.J."/>
            <person name="Wang Z."/>
        </authorList>
    </citation>
    <scope>IDENTIFICATION</scope>
    <scope>FUNCTION</scope>
    <scope>DISRUPTION PHENOTYPE</scope>
</reference>
<feature type="chain" id="PRO_0000443922" description="Autophagy-related protein 23">
    <location>
        <begin position="1"/>
        <end position="1139"/>
    </location>
</feature>
<feature type="domain" description="GRIP" evidence="3">
    <location>
        <begin position="1082"/>
        <end position="1132"/>
    </location>
</feature>
<feature type="region of interest" description="Disordered" evidence="4">
    <location>
        <begin position="1"/>
        <end position="148"/>
    </location>
</feature>
<feature type="region of interest" description="Disordered" evidence="4">
    <location>
        <begin position="225"/>
        <end position="327"/>
    </location>
</feature>
<feature type="region of interest" description="Disordered" evidence="4">
    <location>
        <begin position="356"/>
        <end position="388"/>
    </location>
</feature>
<feature type="region of interest" description="Disordered" evidence="4">
    <location>
        <begin position="475"/>
        <end position="569"/>
    </location>
</feature>
<feature type="region of interest" description="Disordered" evidence="4">
    <location>
        <begin position="648"/>
        <end position="674"/>
    </location>
</feature>
<feature type="region of interest" description="Disordered" evidence="4">
    <location>
        <begin position="720"/>
        <end position="767"/>
    </location>
</feature>
<feature type="region of interest" description="Disordered" evidence="4">
    <location>
        <begin position="786"/>
        <end position="828"/>
    </location>
</feature>
<feature type="region of interest" description="Disordered" evidence="4">
    <location>
        <begin position="935"/>
        <end position="961"/>
    </location>
</feature>
<feature type="region of interest" description="Disordered" evidence="4">
    <location>
        <begin position="977"/>
        <end position="1012"/>
    </location>
</feature>
<feature type="coiled-coil region" evidence="2">
    <location>
        <begin position="142"/>
        <end position="170"/>
    </location>
</feature>
<feature type="coiled-coil region" evidence="2">
    <location>
        <begin position="215"/>
        <end position="259"/>
    </location>
</feature>
<feature type="coiled-coil region" evidence="2">
    <location>
        <begin position="323"/>
        <end position="495"/>
    </location>
</feature>
<feature type="coiled-coil region" evidence="2">
    <location>
        <begin position="566"/>
        <end position="1067"/>
    </location>
</feature>
<feature type="compositionally biased region" description="Basic and acidic residues" evidence="4">
    <location>
        <begin position="7"/>
        <end position="18"/>
    </location>
</feature>
<feature type="compositionally biased region" description="Low complexity" evidence="4">
    <location>
        <begin position="19"/>
        <end position="37"/>
    </location>
</feature>
<feature type="compositionally biased region" description="Basic and acidic residues" evidence="4">
    <location>
        <begin position="225"/>
        <end position="247"/>
    </location>
</feature>
<feature type="compositionally biased region" description="Basic and acidic residues" evidence="4">
    <location>
        <begin position="261"/>
        <end position="273"/>
    </location>
</feature>
<feature type="compositionally biased region" description="Basic and acidic residues" evidence="4">
    <location>
        <begin position="373"/>
        <end position="385"/>
    </location>
</feature>
<feature type="compositionally biased region" description="Basic and acidic residues" evidence="4">
    <location>
        <begin position="475"/>
        <end position="494"/>
    </location>
</feature>
<feature type="compositionally biased region" description="Low complexity" evidence="4">
    <location>
        <begin position="496"/>
        <end position="522"/>
    </location>
</feature>
<feature type="compositionally biased region" description="Basic residues" evidence="4">
    <location>
        <begin position="526"/>
        <end position="537"/>
    </location>
</feature>
<feature type="compositionally biased region" description="Low complexity" evidence="4">
    <location>
        <begin position="651"/>
        <end position="661"/>
    </location>
</feature>
<feature type="compositionally biased region" description="Basic and acidic residues" evidence="4">
    <location>
        <begin position="728"/>
        <end position="767"/>
    </location>
</feature>
<feature type="compositionally biased region" description="Basic and acidic residues" evidence="4">
    <location>
        <begin position="786"/>
        <end position="815"/>
    </location>
</feature>
<feature type="compositionally biased region" description="Basic and acidic residues" evidence="4">
    <location>
        <begin position="935"/>
        <end position="945"/>
    </location>
</feature>
<feature type="compositionally biased region" description="Basic and acidic residues" evidence="4">
    <location>
        <begin position="977"/>
        <end position="1011"/>
    </location>
</feature>
<proteinExistence type="inferred from homology"/>
<dbReference type="EMBL" id="HG970333">
    <property type="protein sequence ID" value="CEF77466.1"/>
    <property type="molecule type" value="Genomic_DNA"/>
</dbReference>
<dbReference type="RefSeq" id="XP_011323020.1">
    <property type="nucleotide sequence ID" value="XM_011324718.1"/>
</dbReference>
<dbReference type="SMR" id="I1RGD4"/>
<dbReference type="STRING" id="229533.I1RGD4"/>
<dbReference type="KEGG" id="fgr:FGSG_02793"/>
<dbReference type="VEuPathDB" id="FungiDB:FGRAMPH1_01G11327"/>
<dbReference type="eggNOG" id="ENOG502S0A5">
    <property type="taxonomic scope" value="Eukaryota"/>
</dbReference>
<dbReference type="HOGENOM" id="CLU_002906_0_0_1"/>
<dbReference type="InParanoid" id="I1RGD4"/>
<dbReference type="OrthoDB" id="137146at110618"/>
<dbReference type="Proteomes" id="UP000070720">
    <property type="component" value="Chromosome 2"/>
</dbReference>
<dbReference type="GO" id="GO:0005794">
    <property type="term" value="C:Golgi apparatus"/>
    <property type="evidence" value="ECO:0007669"/>
    <property type="project" value="TreeGrafter"/>
</dbReference>
<dbReference type="GO" id="GO:0034045">
    <property type="term" value="C:phagophore assembly site membrane"/>
    <property type="evidence" value="ECO:0007669"/>
    <property type="project" value="UniProtKB-SubCell"/>
</dbReference>
<dbReference type="GO" id="GO:0006914">
    <property type="term" value="P:autophagy"/>
    <property type="evidence" value="ECO:0007669"/>
    <property type="project" value="UniProtKB-KW"/>
</dbReference>
<dbReference type="GO" id="GO:0015031">
    <property type="term" value="P:protein transport"/>
    <property type="evidence" value="ECO:0007669"/>
    <property type="project" value="UniProtKB-KW"/>
</dbReference>
<dbReference type="Gene3D" id="1.20.1170.10">
    <property type="match status" value="1"/>
</dbReference>
<dbReference type="InterPro" id="IPR051952">
    <property type="entry name" value="Golgi-autophagy_related"/>
</dbReference>
<dbReference type="InterPro" id="IPR000237">
    <property type="entry name" value="GRIP_dom"/>
</dbReference>
<dbReference type="PANTHER" id="PTHR23157">
    <property type="entry name" value="GRIP AND COILED-COIL DOMAIN-CONTAINING PROTEIN 1"/>
    <property type="match status" value="1"/>
</dbReference>
<dbReference type="PANTHER" id="PTHR23157:SF25">
    <property type="entry name" value="GRIP AND COILED-COIL DOMAIN-CONTAINING PROTEIN 1"/>
    <property type="match status" value="1"/>
</dbReference>
<dbReference type="Pfam" id="PF01465">
    <property type="entry name" value="GRIP"/>
    <property type="match status" value="1"/>
</dbReference>
<dbReference type="SMART" id="SM00755">
    <property type="entry name" value="Grip"/>
    <property type="match status" value="1"/>
</dbReference>
<dbReference type="SUPFAM" id="SSF90257">
    <property type="entry name" value="Myosin rod fragments"/>
    <property type="match status" value="1"/>
</dbReference>
<dbReference type="PROSITE" id="PS50913">
    <property type="entry name" value="GRIP"/>
    <property type="match status" value="1"/>
</dbReference>
<accession>I1RGD4</accession>
<accession>A0A098DHN2</accession>
<name>ATG23_GIBZE</name>
<comment type="function">
    <text evidence="1 5">Required for cytoplasm to vacuole transport (Cvt) vesicle formation and efficient autophagy (By similarity). Plays a role in ATG protein retrieval from the pre-autophagosomal structure (PAS) and is especially required for autophagy-dependent cycling of ATG9 (By similarity). Autophagy is required for proper vegetative growth, asexual/sexual reproduction, and full virulence (PubMed:28894236). Autophagy is particularly involved in the biosynthesis of deoxynivalenol (DON), an important virulence determinant (PubMed:28894236).</text>
</comment>
<comment type="subunit">
    <text evidence="1">Forms a complex with ATG9 and ATG27 (By similarity).</text>
</comment>
<comment type="subcellular location">
    <subcellularLocation>
        <location evidence="1">Cytoplasm</location>
    </subcellularLocation>
    <subcellularLocation>
        <location evidence="1">Preautophagosomal structure membrane</location>
        <topology evidence="1">Peripheral membrane protein</topology>
    </subcellularLocation>
    <text evidence="1">Found in pre-autophagosomal structure and other punctate structures (By similarity). Correct localization of ATG23 to the membranes is strictly dependent of ATG9 (By similarity). Cycling through the pre-autophagosomal structure and correct location to other punctate structures is ATG1- and ATG13-dependent (By similarity).</text>
</comment>
<comment type="disruption phenotype">
    <text evidence="5">Significantly decreases the radial growth of colonies under nutrient-rich conditions (PubMed:28894236).</text>
</comment>
<comment type="similarity">
    <text evidence="7">Belongs to the ATG23 family.</text>
</comment>
<evidence type="ECO:0000250" key="1">
    <source>
        <dbReference type="UniProtKB" id="Q06671"/>
    </source>
</evidence>
<evidence type="ECO:0000255" key="2"/>
<evidence type="ECO:0000255" key="3">
    <source>
        <dbReference type="PROSITE-ProRule" id="PRU00250"/>
    </source>
</evidence>
<evidence type="ECO:0000256" key="4">
    <source>
        <dbReference type="SAM" id="MobiDB-lite"/>
    </source>
</evidence>
<evidence type="ECO:0000269" key="5">
    <source>
    </source>
</evidence>
<evidence type="ECO:0000303" key="6">
    <source>
    </source>
</evidence>
<evidence type="ECO:0000305" key="7"/>